<reference key="1">
    <citation type="journal article" date="2003" name="Nature">
        <title>Genome sequence of Bacillus cereus and comparative analysis with Bacillus anthracis.</title>
        <authorList>
            <person name="Ivanova N."/>
            <person name="Sorokin A."/>
            <person name="Anderson I."/>
            <person name="Galleron N."/>
            <person name="Candelon B."/>
            <person name="Kapatral V."/>
            <person name="Bhattacharyya A."/>
            <person name="Reznik G."/>
            <person name="Mikhailova N."/>
            <person name="Lapidus A."/>
            <person name="Chu L."/>
            <person name="Mazur M."/>
            <person name="Goltsman E."/>
            <person name="Larsen N."/>
            <person name="D'Souza M."/>
            <person name="Walunas T."/>
            <person name="Grechkin Y."/>
            <person name="Pusch G."/>
            <person name="Haselkorn R."/>
            <person name="Fonstein M."/>
            <person name="Ehrlich S.D."/>
            <person name="Overbeek R."/>
            <person name="Kyrpides N.C."/>
        </authorList>
    </citation>
    <scope>NUCLEOTIDE SEQUENCE [LARGE SCALE GENOMIC DNA]</scope>
    <source>
        <strain>ATCC 14579 / DSM 31 / CCUG 7414 / JCM 2152 / NBRC 15305 / NCIMB 9373 / NCTC 2599 / NRRL B-3711</strain>
    </source>
</reference>
<protein>
    <recommendedName>
        <fullName evidence="1">Fluoride-specific ion channel FluC 1</fullName>
    </recommendedName>
</protein>
<gene>
    <name evidence="1" type="primary">fluC1</name>
    <name evidence="1" type="synonym">crcB1</name>
    <name type="ordered locus">BC_5067</name>
</gene>
<feature type="chain" id="PRO_0000110043" description="Fluoride-specific ion channel FluC 1">
    <location>
        <begin position="1"/>
        <end position="144"/>
    </location>
</feature>
<feature type="transmembrane region" description="Helical" evidence="1">
    <location>
        <begin position="11"/>
        <end position="31"/>
    </location>
</feature>
<feature type="transmembrane region" description="Helical" evidence="1">
    <location>
        <begin position="44"/>
        <end position="64"/>
    </location>
</feature>
<feature type="transmembrane region" description="Helical" evidence="1">
    <location>
        <begin position="74"/>
        <end position="94"/>
    </location>
</feature>
<feature type="transmembrane region" description="Helical" evidence="1">
    <location>
        <begin position="107"/>
        <end position="127"/>
    </location>
</feature>
<feature type="binding site" evidence="1">
    <location>
        <position position="84"/>
    </location>
    <ligand>
        <name>Na(+)</name>
        <dbReference type="ChEBI" id="CHEBI:29101"/>
        <note>structural</note>
    </ligand>
</feature>
<feature type="binding site" evidence="1">
    <location>
        <position position="87"/>
    </location>
    <ligand>
        <name>Na(+)</name>
        <dbReference type="ChEBI" id="CHEBI:29101"/>
        <note>structural</note>
    </ligand>
</feature>
<keyword id="KW-1003">Cell membrane</keyword>
<keyword id="KW-0407">Ion channel</keyword>
<keyword id="KW-0406">Ion transport</keyword>
<keyword id="KW-0472">Membrane</keyword>
<keyword id="KW-0479">Metal-binding</keyword>
<keyword id="KW-1185">Reference proteome</keyword>
<keyword id="KW-0915">Sodium</keyword>
<keyword id="KW-0812">Transmembrane</keyword>
<keyword id="KW-1133">Transmembrane helix</keyword>
<keyword id="KW-0813">Transport</keyword>
<evidence type="ECO:0000255" key="1">
    <source>
        <dbReference type="HAMAP-Rule" id="MF_00454"/>
    </source>
</evidence>
<proteinExistence type="inferred from homology"/>
<name>FLUC1_BACCR</name>
<sequence length="144" mass="15905">MSNLFKEVRKLIYIIVGIAGILGALSRYYLGLNITTFWHHSFPLATLLINLIGCFFLAWLTTYIARLNILPSEVITGIGTGFIGSFTTFSTFSVETVQLINHSEWSIAFLYVSCSILGGLIMSGLGYTLGDFLIKKSLTEGDYS</sequence>
<organism>
    <name type="scientific">Bacillus cereus (strain ATCC 14579 / DSM 31 / CCUG 7414 / JCM 2152 / NBRC 15305 / NCIMB 9373 / NCTC 2599 / NRRL B-3711)</name>
    <dbReference type="NCBI Taxonomy" id="226900"/>
    <lineage>
        <taxon>Bacteria</taxon>
        <taxon>Bacillati</taxon>
        <taxon>Bacillota</taxon>
        <taxon>Bacilli</taxon>
        <taxon>Bacillales</taxon>
        <taxon>Bacillaceae</taxon>
        <taxon>Bacillus</taxon>
        <taxon>Bacillus cereus group</taxon>
    </lineage>
</organism>
<dbReference type="EMBL" id="AE016877">
    <property type="protein sequence ID" value="AAP11936.1"/>
    <property type="molecule type" value="Genomic_DNA"/>
</dbReference>
<dbReference type="RefSeq" id="NP_834735.1">
    <property type="nucleotide sequence ID" value="NC_004722.1"/>
</dbReference>
<dbReference type="SMR" id="Q815R6"/>
<dbReference type="STRING" id="226900.BC_5067"/>
<dbReference type="KEGG" id="bce:BC5067"/>
<dbReference type="PATRIC" id="fig|226900.8.peg.5226"/>
<dbReference type="HOGENOM" id="CLU_114342_1_2_9"/>
<dbReference type="OrthoDB" id="9799631at2"/>
<dbReference type="Proteomes" id="UP000001417">
    <property type="component" value="Chromosome"/>
</dbReference>
<dbReference type="GO" id="GO:0005886">
    <property type="term" value="C:plasma membrane"/>
    <property type="evidence" value="ECO:0000318"/>
    <property type="project" value="GO_Central"/>
</dbReference>
<dbReference type="GO" id="GO:0062054">
    <property type="term" value="F:fluoride channel activity"/>
    <property type="evidence" value="ECO:0007669"/>
    <property type="project" value="UniProtKB-UniRule"/>
</dbReference>
<dbReference type="GO" id="GO:1903425">
    <property type="term" value="F:fluoride transmembrane transporter activity"/>
    <property type="evidence" value="ECO:0000318"/>
    <property type="project" value="GO_Central"/>
</dbReference>
<dbReference type="GO" id="GO:0046872">
    <property type="term" value="F:metal ion binding"/>
    <property type="evidence" value="ECO:0007669"/>
    <property type="project" value="UniProtKB-KW"/>
</dbReference>
<dbReference type="GO" id="GO:0140114">
    <property type="term" value="P:cellular detoxification of fluoride"/>
    <property type="evidence" value="ECO:0007669"/>
    <property type="project" value="UniProtKB-UniRule"/>
</dbReference>
<dbReference type="GO" id="GO:1903424">
    <property type="term" value="P:fluoride transmembrane transport"/>
    <property type="evidence" value="ECO:0000318"/>
    <property type="project" value="GO_Central"/>
</dbReference>
<dbReference type="HAMAP" id="MF_00454">
    <property type="entry name" value="FluC"/>
    <property type="match status" value="1"/>
</dbReference>
<dbReference type="InterPro" id="IPR003691">
    <property type="entry name" value="FluC"/>
</dbReference>
<dbReference type="NCBIfam" id="TIGR00494">
    <property type="entry name" value="crcB"/>
    <property type="match status" value="1"/>
</dbReference>
<dbReference type="PANTHER" id="PTHR28259">
    <property type="entry name" value="FLUORIDE EXPORT PROTEIN 1-RELATED"/>
    <property type="match status" value="1"/>
</dbReference>
<dbReference type="PANTHER" id="PTHR28259:SF1">
    <property type="entry name" value="FLUORIDE EXPORT PROTEIN 1-RELATED"/>
    <property type="match status" value="1"/>
</dbReference>
<dbReference type="Pfam" id="PF02537">
    <property type="entry name" value="CRCB"/>
    <property type="match status" value="1"/>
</dbReference>
<accession>Q815R6</accession>
<comment type="function">
    <text evidence="1">Fluoride-specific ion channel. Important for reducing fluoride concentration in the cell, thus reducing its toxicity.</text>
</comment>
<comment type="catalytic activity">
    <reaction evidence="1">
        <text>fluoride(in) = fluoride(out)</text>
        <dbReference type="Rhea" id="RHEA:76159"/>
        <dbReference type="ChEBI" id="CHEBI:17051"/>
    </reaction>
    <physiologicalReaction direction="left-to-right" evidence="1">
        <dbReference type="Rhea" id="RHEA:76160"/>
    </physiologicalReaction>
</comment>
<comment type="activity regulation">
    <text evidence="1">Na(+) is not transported, but it plays an essential structural role and its presence is essential for fluoride channel function.</text>
</comment>
<comment type="subcellular location">
    <subcellularLocation>
        <location evidence="1">Cell membrane</location>
        <topology evidence="1">Multi-pass membrane protein</topology>
    </subcellularLocation>
</comment>
<comment type="similarity">
    <text evidence="1">Belongs to the fluoride channel Fluc/FEX (TC 1.A.43) family.</text>
</comment>